<evidence type="ECO:0000250" key="1"/>
<evidence type="ECO:0000250" key="2">
    <source>
        <dbReference type="UniProtKB" id="P30137"/>
    </source>
</evidence>
<evidence type="ECO:0000255" key="3"/>
<evidence type="ECO:0000269" key="4">
    <source>
    </source>
</evidence>
<evidence type="ECO:0000269" key="5">
    <source>
    </source>
</evidence>
<evidence type="ECO:0000305" key="6"/>
<dbReference type="EC" id="2.5.1.3" evidence="4"/>
<dbReference type="EC" id="2.7.1.49" evidence="2"/>
<dbReference type="EMBL" id="AF000657">
    <property type="protein sequence ID" value="AAB72162.1"/>
    <property type="status" value="ALT_SEQ"/>
    <property type="molecule type" value="Genomic_DNA"/>
</dbReference>
<dbReference type="EMBL" id="CP002684">
    <property type="protein sequence ID" value="AEE30313.1"/>
    <property type="molecule type" value="Genomic_DNA"/>
</dbReference>
<dbReference type="EMBL" id="AY128364">
    <property type="protein sequence ID" value="AAM91567.1"/>
    <property type="molecule type" value="mRNA"/>
</dbReference>
<dbReference type="EMBL" id="BT020417">
    <property type="protein sequence ID" value="AAV97808.1"/>
    <property type="molecule type" value="mRNA"/>
</dbReference>
<dbReference type="PIR" id="E86363">
    <property type="entry name" value="E86363"/>
</dbReference>
<dbReference type="RefSeq" id="NP_173707.2">
    <property type="nucleotide sequence ID" value="NM_102141.3"/>
</dbReference>
<dbReference type="SMR" id="Q5M731"/>
<dbReference type="FunCoup" id="Q5M731">
    <property type="interactions" value="773"/>
</dbReference>
<dbReference type="IntAct" id="Q5M731">
    <property type="interactions" value="1"/>
</dbReference>
<dbReference type="STRING" id="3702.Q5M731"/>
<dbReference type="PaxDb" id="3702-AT1G22940.1"/>
<dbReference type="ProteomicsDB" id="228330"/>
<dbReference type="EnsemblPlants" id="AT1G22940.1">
    <property type="protein sequence ID" value="AT1G22940.1"/>
    <property type="gene ID" value="AT1G22940"/>
</dbReference>
<dbReference type="GeneID" id="838901"/>
<dbReference type="Gramene" id="AT1G22940.1">
    <property type="protein sequence ID" value="AT1G22940.1"/>
    <property type="gene ID" value="AT1G22940"/>
</dbReference>
<dbReference type="KEGG" id="ath:AT1G22940"/>
<dbReference type="Araport" id="AT1G22940"/>
<dbReference type="TAIR" id="AT1G22940">
    <property type="gene designation" value="TH1"/>
</dbReference>
<dbReference type="eggNOG" id="KOG2598">
    <property type="taxonomic scope" value="Eukaryota"/>
</dbReference>
<dbReference type="HOGENOM" id="CLU_018272_7_0_1"/>
<dbReference type="InParanoid" id="Q5M731"/>
<dbReference type="OMA" id="GHIFPTN"/>
<dbReference type="OrthoDB" id="10028886at2759"/>
<dbReference type="PhylomeDB" id="Q5M731"/>
<dbReference type="BioCyc" id="ARA:AT1G22940-MONOMER"/>
<dbReference type="BioCyc" id="MetaCyc:AT1G22940-MONOMER"/>
<dbReference type="SABIO-RK" id="Q5M731"/>
<dbReference type="UniPathway" id="UPA00060">
    <property type="reaction ID" value="UER00137"/>
</dbReference>
<dbReference type="UniPathway" id="UPA00060">
    <property type="reaction ID" value="UER00141"/>
</dbReference>
<dbReference type="PRO" id="PR:Q5M731"/>
<dbReference type="Proteomes" id="UP000006548">
    <property type="component" value="Chromosome 1"/>
</dbReference>
<dbReference type="ExpressionAtlas" id="Q5M731">
    <property type="expression patterns" value="baseline and differential"/>
</dbReference>
<dbReference type="GO" id="GO:0009507">
    <property type="term" value="C:chloroplast"/>
    <property type="evidence" value="ECO:0000314"/>
    <property type="project" value="TAIR"/>
</dbReference>
<dbReference type="GO" id="GO:0009570">
    <property type="term" value="C:chloroplast stroma"/>
    <property type="evidence" value="ECO:0007005"/>
    <property type="project" value="TAIR"/>
</dbReference>
<dbReference type="GO" id="GO:0005524">
    <property type="term" value="F:ATP binding"/>
    <property type="evidence" value="ECO:0007669"/>
    <property type="project" value="UniProtKB-KW"/>
</dbReference>
<dbReference type="GO" id="GO:0008902">
    <property type="term" value="F:hydroxymethylpyrimidine kinase activity"/>
    <property type="evidence" value="ECO:0007669"/>
    <property type="project" value="UniProtKB-EC"/>
</dbReference>
<dbReference type="GO" id="GO:0046872">
    <property type="term" value="F:metal ion binding"/>
    <property type="evidence" value="ECO:0007669"/>
    <property type="project" value="UniProtKB-KW"/>
</dbReference>
<dbReference type="GO" id="GO:0008972">
    <property type="term" value="F:phosphomethylpyrimidine kinase activity"/>
    <property type="evidence" value="ECO:0007669"/>
    <property type="project" value="InterPro"/>
</dbReference>
<dbReference type="GO" id="GO:0004789">
    <property type="term" value="F:thiamine-phosphate diphosphorylase activity"/>
    <property type="evidence" value="ECO:0000314"/>
    <property type="project" value="TAIR"/>
</dbReference>
<dbReference type="GO" id="GO:0009228">
    <property type="term" value="P:thiamine biosynthetic process"/>
    <property type="evidence" value="ECO:0000315"/>
    <property type="project" value="TAIR"/>
</dbReference>
<dbReference type="GO" id="GO:0009229">
    <property type="term" value="P:thiamine diphosphate biosynthetic process"/>
    <property type="evidence" value="ECO:0007669"/>
    <property type="project" value="UniProtKB-UniPathway"/>
</dbReference>
<dbReference type="CDD" id="cd01169">
    <property type="entry name" value="HMPP_kinase"/>
    <property type="match status" value="1"/>
</dbReference>
<dbReference type="CDD" id="cd00564">
    <property type="entry name" value="TMP_TenI"/>
    <property type="match status" value="1"/>
</dbReference>
<dbReference type="FunFam" id="3.20.20.70:FF:000104">
    <property type="entry name" value="Thiamine biosynthetic bifunctional enzyme"/>
    <property type="match status" value="1"/>
</dbReference>
<dbReference type="FunFam" id="3.40.1190.20:FF:000040">
    <property type="entry name" value="Thiamine biosynthetic bifunctional enzyme TH1, chloroplastic"/>
    <property type="match status" value="1"/>
</dbReference>
<dbReference type="Gene3D" id="3.40.1190.20">
    <property type="match status" value="1"/>
</dbReference>
<dbReference type="Gene3D" id="3.20.20.70">
    <property type="entry name" value="Aldolase class I"/>
    <property type="match status" value="1"/>
</dbReference>
<dbReference type="HAMAP" id="MF_00097">
    <property type="entry name" value="TMP_synthase"/>
    <property type="match status" value="1"/>
</dbReference>
<dbReference type="InterPro" id="IPR013785">
    <property type="entry name" value="Aldolase_TIM"/>
</dbReference>
<dbReference type="InterPro" id="IPR004399">
    <property type="entry name" value="HMP/HMP-P_kinase_dom"/>
</dbReference>
<dbReference type="InterPro" id="IPR013749">
    <property type="entry name" value="PM/HMP-P_kinase-1"/>
</dbReference>
<dbReference type="InterPro" id="IPR029056">
    <property type="entry name" value="Ribokinase-like"/>
</dbReference>
<dbReference type="InterPro" id="IPR036206">
    <property type="entry name" value="ThiamineP_synth_sf"/>
</dbReference>
<dbReference type="InterPro" id="IPR022998">
    <property type="entry name" value="ThiamineP_synth_TenI"/>
</dbReference>
<dbReference type="InterPro" id="IPR034291">
    <property type="entry name" value="TMP_synthase"/>
</dbReference>
<dbReference type="NCBIfam" id="TIGR00097">
    <property type="entry name" value="HMP-P_kinase"/>
    <property type="match status" value="1"/>
</dbReference>
<dbReference type="NCBIfam" id="TIGR00693">
    <property type="entry name" value="thiE"/>
    <property type="match status" value="1"/>
</dbReference>
<dbReference type="PANTHER" id="PTHR20858:SF17">
    <property type="entry name" value="HYDROXYMETHYLPYRIMIDINE_PHOSPHOMETHYLPYRIMIDINE KINASE THI20-RELATED"/>
    <property type="match status" value="1"/>
</dbReference>
<dbReference type="PANTHER" id="PTHR20858">
    <property type="entry name" value="PHOSPHOMETHYLPYRIMIDINE KINASE"/>
    <property type="match status" value="1"/>
</dbReference>
<dbReference type="Pfam" id="PF08543">
    <property type="entry name" value="Phos_pyr_kin"/>
    <property type="match status" value="1"/>
</dbReference>
<dbReference type="Pfam" id="PF02581">
    <property type="entry name" value="TMP-TENI"/>
    <property type="match status" value="1"/>
</dbReference>
<dbReference type="SUPFAM" id="SSF53613">
    <property type="entry name" value="Ribokinase-like"/>
    <property type="match status" value="1"/>
</dbReference>
<dbReference type="SUPFAM" id="SSF51391">
    <property type="entry name" value="Thiamin phosphate synthase"/>
    <property type="match status" value="1"/>
</dbReference>
<gene>
    <name type="primary">TH1</name>
    <name type="ordered locus">At1g22940</name>
    <name type="ORF">F19G10.10</name>
</gene>
<sequence>MNSLGGIRSWPANWRSTTASMTTTESVRKVPQVLTVAGSDSGAGAGIQADLKVCAARGVYCASVITAVTAQNTRGVQSVHLLPPEFISEQLKSVLSDFEFDVVKTGMLPSTEIVEVLLQNLSDFPVRALVVDPVMVSTSGHVLAGSSILSIFRERLLPIADIITPNVKEASALLDGFRIETVAEMRSAAKSLHEMGPRFVLVKGGDLPDSSDSVDVYFDGKEFHELRSPRIATRNTHGTGCTLASCIAAELAKGSSMLSAVKVAKRFVDNALDYSKDIVIGSGMQGPFDHFFGLKKDPQSSRCSIFNPDDLFLYAVTDSRMNKKWNRSIVDALKAAIEGGATIIQLREKEAETREFLEEAKACIDICRSHGVSLLINDRIDIALACDADGVHVGQSDMPVDLVRSLLGPDKIIGVSCKTPEQAHQAWKDGADYIGSGGVFPTNTKANNRTIGLDGLKEVCEASKLPVVAIGGIGISNAGSVMQIDAPNLKGVAVVSALFDQDCVLTQAKKLHKTLKESKRGI</sequence>
<reference key="1">
    <citation type="journal article" date="2000" name="Nature">
        <title>Sequence and analysis of chromosome 1 of the plant Arabidopsis thaliana.</title>
        <authorList>
            <person name="Theologis A."/>
            <person name="Ecker J.R."/>
            <person name="Palm C.J."/>
            <person name="Federspiel N.A."/>
            <person name="Kaul S."/>
            <person name="White O."/>
            <person name="Alonso J."/>
            <person name="Altafi H."/>
            <person name="Araujo R."/>
            <person name="Bowman C.L."/>
            <person name="Brooks S.Y."/>
            <person name="Buehler E."/>
            <person name="Chan A."/>
            <person name="Chao Q."/>
            <person name="Chen H."/>
            <person name="Cheuk R.F."/>
            <person name="Chin C.W."/>
            <person name="Chung M.K."/>
            <person name="Conn L."/>
            <person name="Conway A.B."/>
            <person name="Conway A.R."/>
            <person name="Creasy T.H."/>
            <person name="Dewar K."/>
            <person name="Dunn P."/>
            <person name="Etgu P."/>
            <person name="Feldblyum T.V."/>
            <person name="Feng J.-D."/>
            <person name="Fong B."/>
            <person name="Fujii C.Y."/>
            <person name="Gill J.E."/>
            <person name="Goldsmith A.D."/>
            <person name="Haas B."/>
            <person name="Hansen N.F."/>
            <person name="Hughes B."/>
            <person name="Huizar L."/>
            <person name="Hunter J.L."/>
            <person name="Jenkins J."/>
            <person name="Johnson-Hopson C."/>
            <person name="Khan S."/>
            <person name="Khaykin E."/>
            <person name="Kim C.J."/>
            <person name="Koo H.L."/>
            <person name="Kremenetskaia I."/>
            <person name="Kurtz D.B."/>
            <person name="Kwan A."/>
            <person name="Lam B."/>
            <person name="Langin-Hooper S."/>
            <person name="Lee A."/>
            <person name="Lee J.M."/>
            <person name="Lenz C.A."/>
            <person name="Li J.H."/>
            <person name="Li Y.-P."/>
            <person name="Lin X."/>
            <person name="Liu S.X."/>
            <person name="Liu Z.A."/>
            <person name="Luros J.S."/>
            <person name="Maiti R."/>
            <person name="Marziali A."/>
            <person name="Militscher J."/>
            <person name="Miranda M."/>
            <person name="Nguyen M."/>
            <person name="Nierman W.C."/>
            <person name="Osborne B.I."/>
            <person name="Pai G."/>
            <person name="Peterson J."/>
            <person name="Pham P.K."/>
            <person name="Rizzo M."/>
            <person name="Rooney T."/>
            <person name="Rowley D."/>
            <person name="Sakano H."/>
            <person name="Salzberg S.L."/>
            <person name="Schwartz J.R."/>
            <person name="Shinn P."/>
            <person name="Southwick A.M."/>
            <person name="Sun H."/>
            <person name="Tallon L.J."/>
            <person name="Tambunga G."/>
            <person name="Toriumi M.J."/>
            <person name="Town C.D."/>
            <person name="Utterback T."/>
            <person name="Van Aken S."/>
            <person name="Vaysberg M."/>
            <person name="Vysotskaia V.S."/>
            <person name="Walker M."/>
            <person name="Wu D."/>
            <person name="Yu G."/>
            <person name="Fraser C.M."/>
            <person name="Venter J.C."/>
            <person name="Davis R.W."/>
        </authorList>
    </citation>
    <scope>NUCLEOTIDE SEQUENCE [LARGE SCALE GENOMIC DNA]</scope>
    <source>
        <strain>cv. Columbia</strain>
    </source>
</reference>
<reference key="2">
    <citation type="journal article" date="2017" name="Plant J.">
        <title>Araport11: a complete reannotation of the Arabidopsis thaliana reference genome.</title>
        <authorList>
            <person name="Cheng C.Y."/>
            <person name="Krishnakumar V."/>
            <person name="Chan A.P."/>
            <person name="Thibaud-Nissen F."/>
            <person name="Schobel S."/>
            <person name="Town C.D."/>
        </authorList>
    </citation>
    <scope>GENOME REANNOTATION</scope>
    <source>
        <strain>cv. Columbia</strain>
    </source>
</reference>
<reference key="3">
    <citation type="journal article" date="2003" name="Science">
        <title>Empirical analysis of transcriptional activity in the Arabidopsis genome.</title>
        <authorList>
            <person name="Yamada K."/>
            <person name="Lim J."/>
            <person name="Dale J.M."/>
            <person name="Chen H."/>
            <person name="Shinn P."/>
            <person name="Palm C.J."/>
            <person name="Southwick A.M."/>
            <person name="Wu H.C."/>
            <person name="Kim C.J."/>
            <person name="Nguyen M."/>
            <person name="Pham P.K."/>
            <person name="Cheuk R.F."/>
            <person name="Karlin-Newmann G."/>
            <person name="Liu S.X."/>
            <person name="Lam B."/>
            <person name="Sakano H."/>
            <person name="Wu T."/>
            <person name="Yu G."/>
            <person name="Miranda M."/>
            <person name="Quach H.L."/>
            <person name="Tripp M."/>
            <person name="Chang C.H."/>
            <person name="Lee J.M."/>
            <person name="Toriumi M.J."/>
            <person name="Chan M.M."/>
            <person name="Tang C.C."/>
            <person name="Onodera C.S."/>
            <person name="Deng J.M."/>
            <person name="Akiyama K."/>
            <person name="Ansari Y."/>
            <person name="Arakawa T."/>
            <person name="Banh J."/>
            <person name="Banno F."/>
            <person name="Bowser L."/>
            <person name="Brooks S.Y."/>
            <person name="Carninci P."/>
            <person name="Chao Q."/>
            <person name="Choy N."/>
            <person name="Enju A."/>
            <person name="Goldsmith A.D."/>
            <person name="Gurjal M."/>
            <person name="Hansen N.F."/>
            <person name="Hayashizaki Y."/>
            <person name="Johnson-Hopson C."/>
            <person name="Hsuan V.W."/>
            <person name="Iida K."/>
            <person name="Karnes M."/>
            <person name="Khan S."/>
            <person name="Koesema E."/>
            <person name="Ishida J."/>
            <person name="Jiang P.X."/>
            <person name="Jones T."/>
            <person name="Kawai J."/>
            <person name="Kamiya A."/>
            <person name="Meyers C."/>
            <person name="Nakajima M."/>
            <person name="Narusaka M."/>
            <person name="Seki M."/>
            <person name="Sakurai T."/>
            <person name="Satou M."/>
            <person name="Tamse R."/>
            <person name="Vaysberg M."/>
            <person name="Wallender E.K."/>
            <person name="Wong C."/>
            <person name="Yamamura Y."/>
            <person name="Yuan S."/>
            <person name="Shinozaki K."/>
            <person name="Davis R.W."/>
            <person name="Theologis A."/>
            <person name="Ecker J.R."/>
        </authorList>
    </citation>
    <scope>NUCLEOTIDE SEQUENCE [LARGE SCALE MRNA]</scope>
    <source>
        <strain>cv. Columbia</strain>
    </source>
</reference>
<reference key="4">
    <citation type="submission" date="2004-12" db="EMBL/GenBank/DDBJ databases">
        <title>Arabidopsis ORF clones.</title>
        <authorList>
            <person name="Shinn P."/>
            <person name="Chen H."/>
            <person name="Cheuk R.F."/>
            <person name="Kim C.J."/>
            <person name="Ecker J.R."/>
        </authorList>
    </citation>
    <scope>NUCLEOTIDE SEQUENCE [LARGE SCALE MRNA]</scope>
    <source>
        <strain>cv. Columbia</strain>
    </source>
</reference>
<reference key="5">
    <citation type="journal article" date="1988" name="Plant Physiol.">
        <title>A th-1 mutant of Arabidopsis thaliana is defective for a thiamin-phosphate-synthesizing enzyme: thiamin phosphate pyrophosphorylase.</title>
        <authorList>
            <person name="Komeda Y."/>
            <person name="Tanaka M."/>
            <person name="Nishimune T."/>
        </authorList>
    </citation>
    <scope>FUNCTION</scope>
    <scope>CATALYTIC ACTIVITY</scope>
    <scope>BIOPHYSICOCHEMICAL PROPERTIES</scope>
    <source>
        <strain>cv. Columbia</strain>
    </source>
</reference>
<reference key="6">
    <citation type="journal article" date="2007" name="Arch. Biochem. Biophys.">
        <title>Determination of the genetic, molecular, and biochemical basis of the Arabidopsis thaliana thiamin auxotroph th1.</title>
        <authorList>
            <person name="Ajjawi I."/>
            <person name="Tsegaye Y."/>
            <person name="Shintani D."/>
        </authorList>
    </citation>
    <scope>FUNCTION</scope>
    <scope>SUBCELLULAR LOCATION</scope>
    <scope>DISRUPTION PHENOTYPE</scope>
    <scope>MUTAGENESIS OF SER-63</scope>
</reference>
<feature type="transit peptide" description="Chloroplast" evidence="3">
    <location>
        <begin position="1"/>
        <end position="36"/>
    </location>
</feature>
<feature type="chain" id="PRO_0000420252" description="Thiamine biosynthetic bifunctional enzyme TH1, chloroplastic">
    <location>
        <begin position="37"/>
        <end position="522"/>
    </location>
</feature>
<feature type="binding site" evidence="1">
    <location>
        <begin position="345"/>
        <end position="349"/>
    </location>
    <ligand>
        <name>4-amino-2-methyl-5-(diphosphooxymethyl)pyrimidine</name>
        <dbReference type="ChEBI" id="CHEBI:57841"/>
    </ligand>
</feature>
<feature type="binding site" evidence="1">
    <location>
        <position position="377"/>
    </location>
    <ligand>
        <name>4-amino-2-methyl-5-(diphosphooxymethyl)pyrimidine</name>
        <dbReference type="ChEBI" id="CHEBI:57841"/>
    </ligand>
</feature>
<feature type="binding site" evidence="1">
    <location>
        <position position="378"/>
    </location>
    <ligand>
        <name>Mg(2+)</name>
        <dbReference type="ChEBI" id="CHEBI:18420"/>
    </ligand>
</feature>
<feature type="binding site" evidence="1">
    <location>
        <position position="397"/>
    </location>
    <ligand>
        <name>Mg(2+)</name>
        <dbReference type="ChEBI" id="CHEBI:18420"/>
    </ligand>
</feature>
<feature type="binding site" evidence="1">
    <location>
        <position position="416"/>
    </location>
    <ligand>
        <name>4-amino-2-methyl-5-(diphosphooxymethyl)pyrimidine</name>
        <dbReference type="ChEBI" id="CHEBI:57841"/>
    </ligand>
</feature>
<feature type="binding site" evidence="1">
    <location>
        <begin position="442"/>
        <end position="444"/>
    </location>
    <ligand>
        <name>2-[(2R,5Z)-2-carboxy-4-methylthiazol-5(2H)-ylidene]ethyl phosphate</name>
        <dbReference type="ChEBI" id="CHEBI:62899"/>
    </ligand>
</feature>
<feature type="binding site" evidence="1">
    <location>
        <position position="445"/>
    </location>
    <ligand>
        <name>4-amino-2-methyl-5-(diphosphooxymethyl)pyrimidine</name>
        <dbReference type="ChEBI" id="CHEBI:57841"/>
    </ligand>
</feature>
<feature type="binding site" evidence="1">
    <location>
        <position position="472"/>
    </location>
    <ligand>
        <name>2-[(2R,5Z)-2-carboxy-4-methylthiazol-5(2H)-ylidene]ethyl phosphate</name>
        <dbReference type="ChEBI" id="CHEBI:62899"/>
    </ligand>
</feature>
<feature type="binding site" evidence="1">
    <location>
        <begin position="495"/>
        <end position="496"/>
    </location>
    <ligand>
        <name>2-[(2R,5Z)-2-carboxy-4-methylthiazol-5(2H)-ylidene]ethyl phosphate</name>
        <dbReference type="ChEBI" id="CHEBI:62899"/>
    </ligand>
</feature>
<feature type="mutagenesis site" description="In th1-201; loss of activity and seedling lethality." evidence="5">
    <original>S</original>
    <variation>F</variation>
    <location>
        <position position="63"/>
    </location>
</feature>
<feature type="sequence conflict" description="In Ref. 3; AAM91567." evidence="6" ref="3">
    <original>S</original>
    <variation>P</variation>
    <location>
        <position position="301"/>
    </location>
</feature>
<accession>Q5M731</accession>
<accession>O23128</accession>
<accession>Q8L7M9</accession>
<proteinExistence type="evidence at protein level"/>
<comment type="function">
    <text evidence="4 5">Essential for thiamine biosynthesis. Bifunctional enzyme that catalyzes the phosphorylation of hydroxymethylpyrimidine phosphate (HMP-P) to HMP-PP and condenses 4-methyl-5-(beta-hydroxyethyl)thiazole monophosphate (THZ-P) and 2-methyl-4-amino-5-hydroxymethyl pyrimidine pyrophosphate (HMP-PP) to form thiamine monophosphate (TMP).</text>
</comment>
<comment type="catalytic activity">
    <reaction evidence="4">
        <text>2-[(2R,5Z)-2-carboxy-4-methylthiazol-5(2H)-ylidene]ethyl phosphate + 4-amino-2-methyl-5-(diphosphooxymethyl)pyrimidine + 2 H(+) = thiamine phosphate + CO2 + diphosphate</text>
        <dbReference type="Rhea" id="RHEA:47844"/>
        <dbReference type="ChEBI" id="CHEBI:15378"/>
        <dbReference type="ChEBI" id="CHEBI:16526"/>
        <dbReference type="ChEBI" id="CHEBI:33019"/>
        <dbReference type="ChEBI" id="CHEBI:37575"/>
        <dbReference type="ChEBI" id="CHEBI:57841"/>
        <dbReference type="ChEBI" id="CHEBI:62899"/>
        <dbReference type="EC" id="2.5.1.3"/>
    </reaction>
</comment>
<comment type="catalytic activity">
    <reaction evidence="4">
        <text>2-(2-carboxy-4-methylthiazol-5-yl)ethyl phosphate + 4-amino-2-methyl-5-(diphosphooxymethyl)pyrimidine + 2 H(+) = thiamine phosphate + CO2 + diphosphate</text>
        <dbReference type="Rhea" id="RHEA:47848"/>
        <dbReference type="ChEBI" id="CHEBI:15378"/>
        <dbReference type="ChEBI" id="CHEBI:16526"/>
        <dbReference type="ChEBI" id="CHEBI:33019"/>
        <dbReference type="ChEBI" id="CHEBI:37575"/>
        <dbReference type="ChEBI" id="CHEBI:57841"/>
        <dbReference type="ChEBI" id="CHEBI:62890"/>
        <dbReference type="EC" id="2.5.1.3"/>
    </reaction>
</comment>
<comment type="catalytic activity">
    <reaction evidence="4">
        <text>4-methyl-5-(2-phosphooxyethyl)-thiazole + 4-amino-2-methyl-5-(diphosphooxymethyl)pyrimidine + H(+) = thiamine phosphate + diphosphate</text>
        <dbReference type="Rhea" id="RHEA:22328"/>
        <dbReference type="ChEBI" id="CHEBI:15378"/>
        <dbReference type="ChEBI" id="CHEBI:33019"/>
        <dbReference type="ChEBI" id="CHEBI:37575"/>
        <dbReference type="ChEBI" id="CHEBI:57841"/>
        <dbReference type="ChEBI" id="CHEBI:58296"/>
        <dbReference type="EC" id="2.5.1.3"/>
    </reaction>
</comment>
<comment type="catalytic activity">
    <reaction evidence="2">
        <text>4-amino-5-hydroxymethyl-2-methylpyrimidine + ATP = 4-amino-2-methyl-5-(phosphooxymethyl)pyrimidine + ADP + H(+)</text>
        <dbReference type="Rhea" id="RHEA:23096"/>
        <dbReference type="ChEBI" id="CHEBI:15378"/>
        <dbReference type="ChEBI" id="CHEBI:16892"/>
        <dbReference type="ChEBI" id="CHEBI:30616"/>
        <dbReference type="ChEBI" id="CHEBI:58354"/>
        <dbReference type="ChEBI" id="CHEBI:456216"/>
        <dbReference type="EC" id="2.7.1.49"/>
    </reaction>
</comment>
<comment type="cofactor">
    <cofactor evidence="1">
        <name>Mg(2+)</name>
        <dbReference type="ChEBI" id="CHEBI:18420"/>
    </cofactor>
    <text evidence="1">Binds 1 Mg(2+) ion per subunit.</text>
</comment>
<comment type="biophysicochemical properties">
    <kinetics>
        <KM evidence="4">1.8 uM for 2-methyl-4-amino-5-hydroxymethylpyrimidine diphosphate</KM>
        <KM evidence="4">2.7 uM for thiamine phosphate</KM>
    </kinetics>
</comment>
<comment type="pathway">
    <text>Cofactor biosynthesis; thiamine diphosphate biosynthesis; thiamine phosphate from 4-amino-2-methyl-5-diphosphomethylpyrimidine and 4-methyl-5-(2-phosphoethyl)-thiazole: step 1/1.</text>
</comment>
<comment type="pathway">
    <text>Cofactor biosynthesis; thiamine diphosphate biosynthesis; 4-amino-2-methyl-5-diphosphomethylpyrimidine from 5-amino-1-(5-phospho-D-ribosyl)imidazole: step 2/3.</text>
</comment>
<comment type="subcellular location">
    <subcellularLocation>
        <location evidence="5">Plastid</location>
        <location evidence="5">Chloroplast</location>
    </subcellularLocation>
</comment>
<comment type="disruption phenotype">
    <text evidence="5">Seedling lethality. Mutant plants can grow on synthetic medium supplied with thiamine.</text>
</comment>
<comment type="similarity">
    <text evidence="6">Belongs to the thiamine-phosphate synthase family.</text>
</comment>
<comment type="sequence caution" evidence="6">
    <conflict type="erroneous gene model prediction">
        <sequence resource="EMBL-CDS" id="AAB72162"/>
    </conflict>
</comment>
<protein>
    <recommendedName>
        <fullName>Thiamine biosynthetic bifunctional enzyme TH1, chloroplastic</fullName>
    </recommendedName>
    <domain>
        <recommendedName>
            <fullName>Thiamine-phosphate synthase</fullName>
            <shortName>TP synthase</shortName>
            <shortName>TPS</shortName>
            <ecNumber evidence="4">2.5.1.3</ecNumber>
        </recommendedName>
        <alternativeName>
            <fullName>Thiamine-phosphate pyrophosphorylase</fullName>
            <shortName>TMP pyrophosphorylase</shortName>
            <shortName>TMP-PPase</shortName>
        </alternativeName>
    </domain>
    <domain>
        <recommendedName>
            <fullName>Hydroxymethylpyrimidine kinase</fullName>
            <shortName>HMP kinase</shortName>
            <ecNumber evidence="2">2.7.1.49</ecNumber>
        </recommendedName>
    </domain>
</protein>
<keyword id="KW-0067">ATP-binding</keyword>
<keyword id="KW-0150">Chloroplast</keyword>
<keyword id="KW-0418">Kinase</keyword>
<keyword id="KW-0460">Magnesium</keyword>
<keyword id="KW-0479">Metal-binding</keyword>
<keyword id="KW-0511">Multifunctional enzyme</keyword>
<keyword id="KW-0547">Nucleotide-binding</keyword>
<keyword id="KW-0934">Plastid</keyword>
<keyword id="KW-1185">Reference proteome</keyword>
<keyword id="KW-0784">Thiamine biosynthesis</keyword>
<keyword id="KW-0808">Transferase</keyword>
<keyword id="KW-0809">Transit peptide</keyword>
<organism>
    <name type="scientific">Arabidopsis thaliana</name>
    <name type="common">Mouse-ear cress</name>
    <dbReference type="NCBI Taxonomy" id="3702"/>
    <lineage>
        <taxon>Eukaryota</taxon>
        <taxon>Viridiplantae</taxon>
        <taxon>Streptophyta</taxon>
        <taxon>Embryophyta</taxon>
        <taxon>Tracheophyta</taxon>
        <taxon>Spermatophyta</taxon>
        <taxon>Magnoliopsida</taxon>
        <taxon>eudicotyledons</taxon>
        <taxon>Gunneridae</taxon>
        <taxon>Pentapetalae</taxon>
        <taxon>rosids</taxon>
        <taxon>malvids</taxon>
        <taxon>Brassicales</taxon>
        <taxon>Brassicaceae</taxon>
        <taxon>Camelineae</taxon>
        <taxon>Arabidopsis</taxon>
    </lineage>
</organism>
<name>TPS1L_ARATH</name>